<feature type="chain" id="PRO_0000144584" description="V-type proton ATPase catalytic subunit A isoform 1">
    <location>
        <begin position="1" status="less than"/>
        <end position="30" status="greater than"/>
    </location>
</feature>
<feature type="non-terminal residue">
    <location>
        <position position="1"/>
    </location>
</feature>
<feature type="non-terminal residue">
    <location>
        <position position="30"/>
    </location>
</feature>
<name>VATA1_EQUAR</name>
<organism>
    <name type="scientific">Equisetum arvense</name>
    <name type="common">Field horsetail</name>
    <name type="synonym">Common horsetail</name>
    <dbReference type="NCBI Taxonomy" id="3258"/>
    <lineage>
        <taxon>Eukaryota</taxon>
        <taxon>Viridiplantae</taxon>
        <taxon>Streptophyta</taxon>
        <taxon>Embryophyta</taxon>
        <taxon>Tracheophyta</taxon>
        <taxon>Polypodiopsida</taxon>
        <taxon>Equisetidae</taxon>
        <taxon>Equisetales</taxon>
        <taxon>Equisetaceae</taxon>
        <taxon>Equisetum</taxon>
    </lineage>
</organism>
<dbReference type="EC" id="7.1.2.2"/>
<dbReference type="EMBL" id="X56983">
    <property type="protein sequence ID" value="CAA40301.1"/>
    <property type="molecule type" value="Genomic_DNA"/>
</dbReference>
<dbReference type="PIR" id="S21814">
    <property type="entry name" value="S21814"/>
</dbReference>
<dbReference type="GO" id="GO:0005524">
    <property type="term" value="F:ATP binding"/>
    <property type="evidence" value="ECO:0007669"/>
    <property type="project" value="UniProtKB-KW"/>
</dbReference>
<dbReference type="GO" id="GO:1902600">
    <property type="term" value="P:proton transmembrane transport"/>
    <property type="evidence" value="ECO:0007669"/>
    <property type="project" value="UniProtKB-KW"/>
</dbReference>
<sequence>AEVLMDFPQLTMTLPDGREESVMKLTTLVA</sequence>
<keyword id="KW-0067">ATP-binding</keyword>
<keyword id="KW-0375">Hydrogen ion transport</keyword>
<keyword id="KW-0406">Ion transport</keyword>
<keyword id="KW-0547">Nucleotide-binding</keyword>
<keyword id="KW-1278">Translocase</keyword>
<keyword id="KW-0813">Transport</keyword>
<proteinExistence type="inferred from homology"/>
<reference key="1">
    <citation type="journal article" date="1993" name="FEBS Lett.">
        <title>A conserved intron in the V-ATPase A subunit genes of plants and algae.</title>
        <authorList>
            <person name="Starke T."/>
            <person name="Gogarten J.P."/>
        </authorList>
    </citation>
    <scope>NUCLEOTIDE SEQUENCE [GENOMIC DNA]</scope>
</reference>
<evidence type="ECO:0000255" key="1">
    <source>
        <dbReference type="PROSITE-ProRule" id="PRU10106"/>
    </source>
</evidence>
<evidence type="ECO:0000305" key="2"/>
<accession>Q04236</accession>
<comment type="function">
    <text>Catalytic subunit of the peripheral V1 complex of vacuolar ATPase. V-ATPase vacuolar ATPase is responsible for acidifying a variety of intracellular compartments in eukaryotic cells.</text>
</comment>
<comment type="catalytic activity">
    <reaction evidence="1">
        <text>ATP + H2O + 4 H(+)(in) = ADP + phosphate + 5 H(+)(out)</text>
        <dbReference type="Rhea" id="RHEA:57720"/>
        <dbReference type="ChEBI" id="CHEBI:15377"/>
        <dbReference type="ChEBI" id="CHEBI:15378"/>
        <dbReference type="ChEBI" id="CHEBI:30616"/>
        <dbReference type="ChEBI" id="CHEBI:43474"/>
        <dbReference type="ChEBI" id="CHEBI:456216"/>
        <dbReference type="EC" id="7.1.2.2"/>
    </reaction>
</comment>
<comment type="subunit">
    <text>V-ATPase is a heteromultimeric enzyme composed of a peripheral catalytic V1 complex (main components: subunits A, B, C, D, E, and F) attached to an integral membrane V0 proton pore complex (main component: the proteolipid protein).</text>
</comment>
<comment type="miscellaneous">
    <text>Two separate genes encode the catalytic 70 kDa V-ATPase subunit in psilotum and equisetum.</text>
</comment>
<comment type="similarity">
    <text evidence="2">Belongs to the ATPase alpha/beta chains family.</text>
</comment>
<protein>
    <recommendedName>
        <fullName>V-type proton ATPase catalytic subunit A isoform 1</fullName>
        <shortName>V-ATPase subunit A 1</shortName>
    </recommendedName>
    <alternativeName>
        <fullName>Vacuolar proton pump subunit alpha 1</fullName>
        <ecNumber>7.1.2.2</ecNumber>
    </alternativeName>
</protein>